<dbReference type="EMBL" id="X17695">
    <property type="protein sequence ID" value="CAA35689.1"/>
    <property type="molecule type" value="mRNA"/>
</dbReference>
<dbReference type="EMBL" id="M32472">
    <property type="protein sequence ID" value="AAA49713.1"/>
    <property type="molecule type" value="mRNA"/>
</dbReference>
<dbReference type="PIR" id="B34895">
    <property type="entry name" value="B34895"/>
</dbReference>
<dbReference type="SMR" id="P17842"/>
<dbReference type="GO" id="GO:0005634">
    <property type="term" value="C:nucleus"/>
    <property type="evidence" value="ECO:0007669"/>
    <property type="project" value="UniProtKB-SubCell"/>
</dbReference>
<dbReference type="GO" id="GO:0003677">
    <property type="term" value="F:DNA binding"/>
    <property type="evidence" value="ECO:0007669"/>
    <property type="project" value="UniProtKB-KW"/>
</dbReference>
<dbReference type="GO" id="GO:0003723">
    <property type="term" value="F:RNA binding"/>
    <property type="evidence" value="ECO:0007669"/>
    <property type="project" value="UniProtKB-KW"/>
</dbReference>
<dbReference type="GO" id="GO:0008270">
    <property type="term" value="F:zinc ion binding"/>
    <property type="evidence" value="ECO:0007669"/>
    <property type="project" value="UniProtKB-KW"/>
</dbReference>
<dbReference type="GO" id="GO:0042273">
    <property type="term" value="P:ribosomal large subunit biogenesis"/>
    <property type="evidence" value="ECO:0000250"/>
    <property type="project" value="UniProtKB"/>
</dbReference>
<dbReference type="FunFam" id="3.30.160.60:FF:001572">
    <property type="entry name" value="General transcription factor IIIA"/>
    <property type="match status" value="1"/>
</dbReference>
<dbReference type="FunFam" id="3.30.160.60:FF:001102">
    <property type="entry name" value="Transcription factor IIIA"/>
    <property type="match status" value="2"/>
</dbReference>
<dbReference type="FunFam" id="3.30.160.60:FF:001347">
    <property type="entry name" value="Transcription factor IIIA"/>
    <property type="match status" value="1"/>
</dbReference>
<dbReference type="FunFam" id="3.30.160.60:FF:001998">
    <property type="entry name" value="Transcription factor IIIA"/>
    <property type="match status" value="1"/>
</dbReference>
<dbReference type="FunFam" id="3.30.160.60:FF:003303">
    <property type="entry name" value="Transcription factor IIIA"/>
    <property type="match status" value="1"/>
</dbReference>
<dbReference type="FunFam" id="3.30.160.60:FF:000446">
    <property type="entry name" value="Zinc finger protein"/>
    <property type="match status" value="1"/>
</dbReference>
<dbReference type="Gene3D" id="3.30.160.60">
    <property type="entry name" value="Classic Zinc Finger"/>
    <property type="match status" value="9"/>
</dbReference>
<dbReference type="InterPro" id="IPR054599">
    <property type="entry name" value="TFIIIA_Zfn-C2H2"/>
</dbReference>
<dbReference type="InterPro" id="IPR051061">
    <property type="entry name" value="Zinc_finger_trans_reg"/>
</dbReference>
<dbReference type="InterPro" id="IPR036236">
    <property type="entry name" value="Znf_C2H2_sf"/>
</dbReference>
<dbReference type="InterPro" id="IPR013087">
    <property type="entry name" value="Znf_C2H2_type"/>
</dbReference>
<dbReference type="PANTHER" id="PTHR46179:SF1">
    <property type="entry name" value="TRANSCRIPTION FACTOR IIIA"/>
    <property type="match status" value="1"/>
</dbReference>
<dbReference type="PANTHER" id="PTHR46179">
    <property type="entry name" value="ZINC FINGER PROTEIN"/>
    <property type="match status" value="1"/>
</dbReference>
<dbReference type="Pfam" id="PF22110">
    <property type="entry name" value="TFIIIA_zf-C2H2"/>
    <property type="match status" value="1"/>
</dbReference>
<dbReference type="Pfam" id="PF00096">
    <property type="entry name" value="zf-C2H2"/>
    <property type="match status" value="6"/>
</dbReference>
<dbReference type="SMART" id="SM00355">
    <property type="entry name" value="ZnF_C2H2"/>
    <property type="match status" value="9"/>
</dbReference>
<dbReference type="SUPFAM" id="SSF57667">
    <property type="entry name" value="beta-beta-alpha zinc fingers"/>
    <property type="match status" value="6"/>
</dbReference>
<dbReference type="PROSITE" id="PS00028">
    <property type="entry name" value="ZINC_FINGER_C2H2_1"/>
    <property type="match status" value="8"/>
</dbReference>
<dbReference type="PROSITE" id="PS50157">
    <property type="entry name" value="ZINC_FINGER_C2H2_2"/>
    <property type="match status" value="8"/>
</dbReference>
<protein>
    <recommendedName>
        <fullName>Transcription factor IIIA</fullName>
        <shortName>TFIIIA</shortName>
    </recommendedName>
</protein>
<organism>
    <name type="scientific">Xenopus borealis</name>
    <name type="common">Kenyan clawed frog</name>
    <dbReference type="NCBI Taxonomy" id="8354"/>
    <lineage>
        <taxon>Eukaryota</taxon>
        <taxon>Metazoa</taxon>
        <taxon>Chordata</taxon>
        <taxon>Craniata</taxon>
        <taxon>Vertebrata</taxon>
        <taxon>Euteleostomi</taxon>
        <taxon>Amphibia</taxon>
        <taxon>Batrachia</taxon>
        <taxon>Anura</taxon>
        <taxon>Pipoidea</taxon>
        <taxon>Pipidae</taxon>
        <taxon>Xenopodinae</taxon>
        <taxon>Xenopus</taxon>
        <taxon>Xenopus</taxon>
    </lineage>
</organism>
<name>TF3A_XENBO</name>
<evidence type="ECO:0000250" key="1">
    <source>
        <dbReference type="UniProtKB" id="P03001"/>
    </source>
</evidence>
<evidence type="ECO:0000250" key="2">
    <source>
        <dbReference type="UniProtKB" id="Q92664"/>
    </source>
</evidence>
<evidence type="ECO:0000255" key="3">
    <source>
        <dbReference type="PROSITE-ProRule" id="PRU00042"/>
    </source>
</evidence>
<evidence type="ECO:0000256" key="4">
    <source>
        <dbReference type="SAM" id="MobiDB-lite"/>
    </source>
</evidence>
<evidence type="ECO:0000269" key="5">
    <source>
    </source>
</evidence>
<evidence type="ECO:0000305" key="6"/>
<sequence length="339" mass="39202">MGEKALPVVYKRYICSFADCGASYNKNWKLRAHLCKHTGEKPFPCKEEGCDKGFTSLHHLTRHSITHTGEKNFKCDSDKCDLTFTTKANMKKHFNRFHNLQLCVYVCHFEGCDKAFKKHNQLKVHQFTHTQQLPYKCPHEGCDKSFSVPSCLKRHEKVHAGYPCKKDDSCLFVGKTWTLYLKHVKECHQEPVMCDECKRTFKHKDYLRNHKKTHKKERTVYCCPRDGCERSYTTEFNLQSHMQSFHEEQRPFACEHAECGKSFAMKKSLERHSVVHDPEKRKLKEKCPRPKRSLASRLSGCAPPKSKEKSAAKATEKTGSVVKNKPSGTETKGSLVIEK</sequence>
<proteinExistence type="evidence at transcript level"/>
<feature type="chain" id="PRO_0000047084" description="Transcription factor IIIA">
    <location>
        <begin position="1"/>
        <end position="339"/>
    </location>
</feature>
<feature type="zinc finger region" description="C2H2-type 1" evidence="3">
    <location>
        <begin position="13"/>
        <end position="37"/>
    </location>
</feature>
<feature type="zinc finger region" description="C2H2-type 2" evidence="3">
    <location>
        <begin position="43"/>
        <end position="67"/>
    </location>
</feature>
<feature type="zinc finger region" description="C2H2-type 3" evidence="3">
    <location>
        <begin position="73"/>
        <end position="98"/>
    </location>
</feature>
<feature type="zinc finger region" description="C2H2-type 4" evidence="3">
    <location>
        <begin position="105"/>
        <end position="129"/>
    </location>
</feature>
<feature type="zinc finger region" description="C2H2-type 5" evidence="3">
    <location>
        <begin position="135"/>
        <end position="159"/>
    </location>
</feature>
<feature type="zinc finger region" description="C2H2-type 6" evidence="3">
    <location>
        <begin position="162"/>
        <end position="188"/>
    </location>
</feature>
<feature type="zinc finger region" description="C2H2-type 7" evidence="3">
    <location>
        <begin position="192"/>
        <end position="214"/>
    </location>
</feature>
<feature type="zinc finger region" description="C2H2-type 8" evidence="3">
    <location>
        <begin position="221"/>
        <end position="246"/>
    </location>
</feature>
<feature type="zinc finger region" description="C2H2-type 9" evidence="3">
    <location>
        <begin position="252"/>
        <end position="276"/>
    </location>
</feature>
<feature type="region of interest" description="Disordered" evidence="4">
    <location>
        <begin position="275"/>
        <end position="339"/>
    </location>
</feature>
<feature type="compositionally biased region" description="Basic and acidic residues" evidence="4">
    <location>
        <begin position="275"/>
        <end position="288"/>
    </location>
</feature>
<feature type="compositionally biased region" description="Basic and acidic residues" evidence="4">
    <location>
        <begin position="305"/>
        <end position="316"/>
    </location>
</feature>
<feature type="sequence conflict" description="In Ref. 2; AAA49713." evidence="6" ref="2">
    <original>C</original>
    <variation>R</variation>
    <location>
        <position position="222"/>
    </location>
</feature>
<feature type="sequence conflict" description="In Ref. 2; AAA49713." evidence="6" ref="2">
    <original>E</original>
    <variation>A</variation>
    <location>
        <position position="235"/>
    </location>
</feature>
<feature type="sequence conflict" description="In Ref. 2; AAA49713." evidence="6" ref="2">
    <original>R</original>
    <variation>K</variation>
    <location>
        <position position="292"/>
    </location>
</feature>
<feature type="sequence conflict" description="In Ref. 2; AAA49713." evidence="6" ref="2">
    <original>S</original>
    <variation>N</variation>
    <location>
        <position position="310"/>
    </location>
</feature>
<feature type="sequence conflict" description="In Ref. 2; AAA49713." evidence="6" ref="2">
    <original>A</original>
    <variation>G</variation>
    <location>
        <position position="314"/>
    </location>
</feature>
<feature type="sequence conflict" description="In Ref. 2; AAA49713." evidence="6" ref="2">
    <original>G</original>
    <variation>D</variation>
    <location>
        <position position="319"/>
    </location>
</feature>
<feature type="sequence conflict" description="In Ref. 2; AAA49713." evidence="6" ref="2">
    <original>V</original>
    <variation>A</variation>
    <location>
        <position position="336"/>
    </location>
</feature>
<gene>
    <name type="primary">gtf3a</name>
</gene>
<comment type="function">
    <text evidence="1 2 5">Involved in ribosomal large subunit biogenesis (By similarity). Interacts with the internal control region (ICR) of approximately 50 bases within the 5S RNA genes, is required for correct transcription of these genes by RNA polymerase III (By similarity). Also binds the transcribed 5S RNA's (PubMed:2331751).</text>
</comment>
<comment type="subcellular location">
    <subcellularLocation>
        <location>Nucleus</location>
    </subcellularLocation>
</comment>
<comment type="tissue specificity">
    <text>Synthesized in oocytes and, in much lower levels, in somatic cells.</text>
</comment>
<reference key="1">
    <citation type="journal article" date="1990" name="Nucleic Acids Res.">
        <title>Sequence variation in transcription factor IIIA.</title>
        <authorList>
            <person name="Gaskins C.J."/>
            <person name="Hanas J.S."/>
        </authorList>
    </citation>
    <scope>NUCLEOTIDE SEQUENCE [MRNA]</scope>
    <source>
        <tissue>Ovary</tissue>
    </source>
</reference>
<reference key="2">
    <citation type="journal article" date="1990" name="Cell">
        <title>A finger protein structurally similar to TFIIIA that binds exclusively to 5S RNA in Xenopus.</title>
        <authorList>
            <person name="Joho K.E."/>
            <person name="Darby M.K."/>
            <person name="Crawford E.T."/>
            <person name="Brown D.D."/>
        </authorList>
    </citation>
    <scope>NUCLEOTIDE SEQUENCE [MRNA]</scope>
    <scope>FUNCTION</scope>
</reference>
<accession>P17842</accession>
<keyword id="KW-0238">DNA-binding</keyword>
<keyword id="KW-0479">Metal-binding</keyword>
<keyword id="KW-0539">Nucleus</keyword>
<keyword id="KW-0677">Repeat</keyword>
<keyword id="KW-0690">Ribosome biogenesis</keyword>
<keyword id="KW-0694">RNA-binding</keyword>
<keyword id="KW-0804">Transcription</keyword>
<keyword id="KW-0805">Transcription regulation</keyword>
<keyword id="KW-0862">Zinc</keyword>
<keyword id="KW-0863">Zinc-finger</keyword>